<sequence>MAFKSFIYSKGYHRSAAQKKTATSFFDSSYQYLRQNQGLVNSDPVLHASHLHPHPVVVANVNYNNVDDILHPHDLDSSINNTNNPLTHEELLYNQNVSLRSLKQQQSTNYVNNNNNNQHRYYSTGPTLPTNQYDPLNFSNRNFQDLSLKTSQPSVQQPQNEYSLLKDENAPVWKEDTEPCLNKSTYLQTHIDEINRCYEQKNYNKINSLYQSLKRNDIVPPLEIFTKVLDSLCKRPLDNNDLDNKMYELLTCYQDMINNRLKPPDEIYNIVLLSLFKGSILAYQFENPNGSDFYKIAIELFNTTTNDPKQKSVVKFRNFSKDVLDYNLLAMNIYPGHITLSKAQQVIKSSPAFIKDSFYFIACFSYAKLTNDKFAIKELYEDFRLSLSSGSPDQGLFDDQFEIYSVILSSFIETGEVELATNLLDDLVSKIQSSNGLASNISLLLSSFLISMSKVDPSKAYEIWFKFHNLNWIPEFSYEFYLVFMANSFQDWNLTKKIYDYIFPMERNLSPLKKQKLSDYLLHPIGVDSITTSLLDYSLQLKDNEVIMKILEESIVKNFSFDIGIYPFVFNYLREIQCGEDYLMRFIESHAEFIKKSNSINKFQFLNMIVDNFQSQSLLNKISHAKFFKNFVEDFNLENCELVSYNGLISCINNFIKIPKTIKDFPYILEIHAILVTKLFDFDTYPILQNGNNEVLLKFRDQIEHQFKMLAQNFCRLNLDPNLLAGVVSQAMKMVNLDDTANGQDLLNFFNHPGDWDKSYPLSLGSFIRNSPRGGIREFTKLSKEGYCFDYDTYKELIIKRAINKQIIDKCLEVCPDSIELKNIVNLMISKIPGRNLTQLIINNPKFSKVFVPNLRNDSMLKLIENCESLSNFIRICDFPEKFKSIAIQAENKNAIELIYERLFDGGKYADILRYNNIVPVLNLELLLKSCIRSGEFKKYESLSKKFNDKISESSKIDIQLEYLINKNDLKGAFTLFEKTPRELRTPHKTMDLYTFALFLDSFNRNITYYESPENTLQFANILSSQTSFINLLSTYNLIAHSDHLMNFNVGGMAAKVKKEILNQMLNNLYDSIRLLSPSIENDKSMKEKLREKVKNYCRFKAYLKSPELDMDELKTLVSVESFLNPFTPSMLFNNLIETIYINEHASSLVLQNGLIYSLQQKGLNKILSYLEESFITSGNDANIEKVREFRSLLRKSKPLQA</sequence>
<name>RPM2_YEAST</name>
<feature type="transit peptide" description="Mitochondrion" evidence="2">
    <location>
        <begin position="1"/>
        <end position="122"/>
    </location>
</feature>
<feature type="chain" id="PRO_0000022247" description="Ribonuclease P protein component, mitochondrial">
    <location>
        <begin position="123"/>
        <end position="1202"/>
    </location>
</feature>
<feature type="region of interest" description="Disordered" evidence="1">
    <location>
        <begin position="109"/>
        <end position="134"/>
    </location>
</feature>
<feature type="compositionally biased region" description="Polar residues" evidence="1">
    <location>
        <begin position="118"/>
        <end position="134"/>
    </location>
</feature>
<proteinExistence type="evidence at protein level"/>
<keyword id="KW-0903">Direct protein sequencing</keyword>
<keyword id="KW-0255">Endonuclease</keyword>
<keyword id="KW-0378">Hydrolase</keyword>
<keyword id="KW-0496">Mitochondrion</keyword>
<keyword id="KW-0540">Nuclease</keyword>
<keyword id="KW-1185">Reference proteome</keyword>
<keyword id="KW-0809">Transit peptide</keyword>
<keyword id="KW-0819">tRNA processing</keyword>
<accession>Q02773</accession>
<accession>D6W0J4</accession>
<gene>
    <name type="primary">RPM2</name>
    <name type="ordered locus">YML091C</name>
</gene>
<evidence type="ECO:0000256" key="1">
    <source>
        <dbReference type="SAM" id="MobiDB-lite"/>
    </source>
</evidence>
<evidence type="ECO:0000269" key="2">
    <source>
    </source>
</evidence>
<evidence type="ECO:0000269" key="3">
    <source>
    </source>
</evidence>
<organism>
    <name type="scientific">Saccharomyces cerevisiae (strain ATCC 204508 / S288c)</name>
    <name type="common">Baker's yeast</name>
    <dbReference type="NCBI Taxonomy" id="559292"/>
    <lineage>
        <taxon>Eukaryota</taxon>
        <taxon>Fungi</taxon>
        <taxon>Dikarya</taxon>
        <taxon>Ascomycota</taxon>
        <taxon>Saccharomycotina</taxon>
        <taxon>Saccharomycetes</taxon>
        <taxon>Saccharomycetales</taxon>
        <taxon>Saccharomycetaceae</taxon>
        <taxon>Saccharomyces</taxon>
    </lineage>
</organism>
<comment type="function">
    <text>Ribonuclease P generates mature tRNA molecules by cleaving their 5'-ends.</text>
</comment>
<comment type="catalytic activity">
    <reaction>
        <text>Endonucleolytic cleavage of RNA, removing 5'-extranucleotides from tRNA precursor.</text>
        <dbReference type="EC" id="3.1.26.5"/>
    </reaction>
</comment>
<comment type="subunit">
    <text>Consists of an RNA moiety (RPM1) and the protein component (RPM2). Both are necessary for full enzymatic activity.</text>
</comment>
<comment type="subcellular location">
    <subcellularLocation>
        <location>Mitochondrion</location>
    </subcellularLocation>
</comment>
<comment type="miscellaneous">
    <text evidence="3">Present with 1160 molecules/cell in log phase SD medium.</text>
</comment>
<reference key="1">
    <citation type="journal article" date="1992" name="Proc. Natl. Acad. Sci. U.S.A.">
        <title>A 105-kDa protein is required for yeast mitochondrial RNase P activity.</title>
        <authorList>
            <person name="Morales M.J."/>
            <person name="Dang Y.L."/>
            <person name="Lou Y.C."/>
            <person name="Sulo P."/>
            <person name="Martin N.C."/>
        </authorList>
    </citation>
    <scope>NUCLEOTIDE SEQUENCE</scope>
    <scope>PROTEIN SEQUENCE OF 123-142</scope>
</reference>
<reference key="2">
    <citation type="journal article" date="1997" name="Nature">
        <title>The nucleotide sequence of Saccharomyces cerevisiae chromosome XIII.</title>
        <authorList>
            <person name="Bowman S."/>
            <person name="Churcher C.M."/>
            <person name="Badcock K."/>
            <person name="Brown D."/>
            <person name="Chillingworth T."/>
            <person name="Connor R."/>
            <person name="Dedman K."/>
            <person name="Devlin K."/>
            <person name="Gentles S."/>
            <person name="Hamlin N."/>
            <person name="Hunt S."/>
            <person name="Jagels K."/>
            <person name="Lye G."/>
            <person name="Moule S."/>
            <person name="Odell C."/>
            <person name="Pearson D."/>
            <person name="Rajandream M.A."/>
            <person name="Rice P."/>
            <person name="Skelton J."/>
            <person name="Walsh S.V."/>
            <person name="Whitehead S."/>
            <person name="Barrell B.G."/>
        </authorList>
    </citation>
    <scope>NUCLEOTIDE SEQUENCE [LARGE SCALE GENOMIC DNA]</scope>
    <source>
        <strain>ATCC 204508 / S288c</strain>
    </source>
</reference>
<reference key="3">
    <citation type="journal article" date="2014" name="G3 (Bethesda)">
        <title>The reference genome sequence of Saccharomyces cerevisiae: Then and now.</title>
        <authorList>
            <person name="Engel S.R."/>
            <person name="Dietrich F.S."/>
            <person name="Fisk D.G."/>
            <person name="Binkley G."/>
            <person name="Balakrishnan R."/>
            <person name="Costanzo M.C."/>
            <person name="Dwight S.S."/>
            <person name="Hitz B.C."/>
            <person name="Karra K."/>
            <person name="Nash R.S."/>
            <person name="Weng S."/>
            <person name="Wong E.D."/>
            <person name="Lloyd P."/>
            <person name="Skrzypek M.S."/>
            <person name="Miyasato S.R."/>
            <person name="Simison M."/>
            <person name="Cherry J.M."/>
        </authorList>
    </citation>
    <scope>GENOME REANNOTATION</scope>
    <source>
        <strain>ATCC 204508 / S288c</strain>
    </source>
</reference>
<reference key="4">
    <citation type="journal article" date="2003" name="Nature">
        <title>Global analysis of protein expression in yeast.</title>
        <authorList>
            <person name="Ghaemmaghami S."/>
            <person name="Huh W.-K."/>
            <person name="Bower K."/>
            <person name="Howson R.W."/>
            <person name="Belle A."/>
            <person name="Dephoure N."/>
            <person name="O'Shea E.K."/>
            <person name="Weissman J.S."/>
        </authorList>
    </citation>
    <scope>LEVEL OF PROTEIN EXPRESSION [LARGE SCALE ANALYSIS]</scope>
</reference>
<protein>
    <recommendedName>
        <fullName>Ribonuclease P protein component, mitochondrial</fullName>
        <shortName>RNase P</shortName>
        <ecNumber>3.1.26.5</ecNumber>
    </recommendedName>
</protein>
<dbReference type="EC" id="3.1.26.5"/>
<dbReference type="EMBL" id="L06209">
    <property type="protein sequence ID" value="AAA03168.1"/>
    <property type="molecule type" value="Unassigned_DNA"/>
</dbReference>
<dbReference type="EMBL" id="Z46660">
    <property type="protein sequence ID" value="CAA86647.1"/>
    <property type="molecule type" value="Genomic_DNA"/>
</dbReference>
<dbReference type="EMBL" id="BK006946">
    <property type="protein sequence ID" value="DAA09808.1"/>
    <property type="molecule type" value="Genomic_DNA"/>
</dbReference>
<dbReference type="PIR" id="A48773">
    <property type="entry name" value="A48773"/>
</dbReference>
<dbReference type="RefSeq" id="NP_013619.1">
    <property type="nucleotide sequence ID" value="NM_001182450.1"/>
</dbReference>
<dbReference type="SMR" id="Q02773"/>
<dbReference type="BioGRID" id="35052">
    <property type="interactions" value="60"/>
</dbReference>
<dbReference type="ComplexPortal" id="CPX-1294">
    <property type="entry name" value="Mitochondrial ribonuclease P complex"/>
</dbReference>
<dbReference type="DIP" id="DIP-6320N"/>
<dbReference type="FunCoup" id="Q02773">
    <property type="interactions" value="347"/>
</dbReference>
<dbReference type="IntAct" id="Q02773">
    <property type="interactions" value="19"/>
</dbReference>
<dbReference type="MINT" id="Q02773"/>
<dbReference type="STRING" id="4932.YML091C"/>
<dbReference type="iPTMnet" id="Q02773"/>
<dbReference type="PaxDb" id="4932-YML091C"/>
<dbReference type="PeptideAtlas" id="Q02773"/>
<dbReference type="EnsemblFungi" id="YML091C_mRNA">
    <property type="protein sequence ID" value="YML091C"/>
    <property type="gene ID" value="YML091C"/>
</dbReference>
<dbReference type="GeneID" id="854883"/>
<dbReference type="KEGG" id="sce:YML091C"/>
<dbReference type="AGR" id="SGD:S000004556"/>
<dbReference type="SGD" id="S000004556">
    <property type="gene designation" value="RPM2"/>
</dbReference>
<dbReference type="VEuPathDB" id="FungiDB:YML091C"/>
<dbReference type="eggNOG" id="ENOG502S4M0">
    <property type="taxonomic scope" value="Eukaryota"/>
</dbReference>
<dbReference type="HOGENOM" id="CLU_270952_0_0_1"/>
<dbReference type="InParanoid" id="Q02773"/>
<dbReference type="OMA" id="GDWDKSY"/>
<dbReference type="OrthoDB" id="185373at2759"/>
<dbReference type="BioCyc" id="YEAST:YML091C-MONOMER"/>
<dbReference type="BioGRID-ORCS" id="854883">
    <property type="hits" value="0 hits in 10 CRISPR screens"/>
</dbReference>
<dbReference type="CD-CODE" id="A777E0F8">
    <property type="entry name" value="P-body"/>
</dbReference>
<dbReference type="PRO" id="PR:Q02773"/>
<dbReference type="Proteomes" id="UP000002311">
    <property type="component" value="Chromosome XIII"/>
</dbReference>
<dbReference type="RNAct" id="Q02773">
    <property type="molecule type" value="protein"/>
</dbReference>
<dbReference type="GO" id="GO:0005759">
    <property type="term" value="C:mitochondrial matrix"/>
    <property type="evidence" value="ECO:0000314"/>
    <property type="project" value="SGD"/>
</dbReference>
<dbReference type="GO" id="GO:0030678">
    <property type="term" value="C:mitochondrial ribonuclease P complex"/>
    <property type="evidence" value="ECO:0000314"/>
    <property type="project" value="SGD"/>
</dbReference>
<dbReference type="GO" id="GO:0005739">
    <property type="term" value="C:mitochondrion"/>
    <property type="evidence" value="ECO:0007005"/>
    <property type="project" value="SGD"/>
</dbReference>
<dbReference type="GO" id="GO:0005634">
    <property type="term" value="C:nucleus"/>
    <property type="evidence" value="ECO:0000314"/>
    <property type="project" value="SGD"/>
</dbReference>
<dbReference type="GO" id="GO:0030677">
    <property type="term" value="C:ribonuclease P complex"/>
    <property type="evidence" value="ECO:0000314"/>
    <property type="project" value="SGD"/>
</dbReference>
<dbReference type="GO" id="GO:0003729">
    <property type="term" value="F:mRNA binding"/>
    <property type="evidence" value="ECO:0000318"/>
    <property type="project" value="GO_Central"/>
</dbReference>
<dbReference type="GO" id="GO:0004526">
    <property type="term" value="F:ribonuclease P activity"/>
    <property type="evidence" value="ECO:0007669"/>
    <property type="project" value="UniProtKB-EC"/>
</dbReference>
<dbReference type="GO" id="GO:0002181">
    <property type="term" value="P:cytoplasmic translation"/>
    <property type="evidence" value="ECO:0000315"/>
    <property type="project" value="SGD"/>
</dbReference>
<dbReference type="GO" id="GO:0097745">
    <property type="term" value="P:mitochondrial tRNA 5'-end processing"/>
    <property type="evidence" value="ECO:0000315"/>
    <property type="project" value="SGD"/>
</dbReference>
<dbReference type="GO" id="GO:0007005">
    <property type="term" value="P:mitochondrion organization"/>
    <property type="evidence" value="ECO:0000315"/>
    <property type="project" value="SGD"/>
</dbReference>
<dbReference type="GO" id="GO:0006397">
    <property type="term" value="P:mRNA processing"/>
    <property type="evidence" value="ECO:0000316"/>
    <property type="project" value="SGD"/>
</dbReference>
<dbReference type="GO" id="GO:0045944">
    <property type="term" value="P:positive regulation of transcription by RNA polymerase II"/>
    <property type="evidence" value="ECO:0000314"/>
    <property type="project" value="SGD"/>
</dbReference>
<dbReference type="GO" id="GO:0006396">
    <property type="term" value="P:RNA processing"/>
    <property type="evidence" value="ECO:0000315"/>
    <property type="project" value="SGD"/>
</dbReference>
<dbReference type="GO" id="GO:0001682">
    <property type="term" value="P:tRNA 5'-leader removal"/>
    <property type="evidence" value="ECO:0000314"/>
    <property type="project" value="ComplexPortal"/>
</dbReference>
<dbReference type="InterPro" id="IPR051114">
    <property type="entry name" value="Mito_RNA_Proc_CCM1"/>
</dbReference>
<dbReference type="InterPro" id="IPR013888">
    <property type="entry name" value="RNase_P_Rpm2_mt"/>
</dbReference>
<dbReference type="PANTHER" id="PTHR47934:SF6">
    <property type="entry name" value="MITOCHONDRIAL GROUP I INTRON SPLICING FACTOR CCM1-RELATED"/>
    <property type="match status" value="1"/>
</dbReference>
<dbReference type="PANTHER" id="PTHR47934">
    <property type="entry name" value="PENTATRICOPEPTIDE REPEAT-CONTAINING PROTEIN PET309, MITOCHONDRIAL"/>
    <property type="match status" value="1"/>
</dbReference>
<dbReference type="Pfam" id="PF08579">
    <property type="entry name" value="RPM2"/>
    <property type="match status" value="1"/>
</dbReference>